<name>BAME_ECOLI</name>
<dbReference type="EMBL" id="U36840">
    <property type="protein sequence ID" value="AAA79787.1"/>
    <property type="molecule type" value="Genomic_DNA"/>
</dbReference>
<dbReference type="EMBL" id="U00096">
    <property type="protein sequence ID" value="AAC75666.2"/>
    <property type="molecule type" value="Genomic_DNA"/>
</dbReference>
<dbReference type="EMBL" id="AP009048">
    <property type="protein sequence ID" value="BAA16502.1"/>
    <property type="molecule type" value="Genomic_DNA"/>
</dbReference>
<dbReference type="EMBL" id="X52620">
    <property type="protein sequence ID" value="CAA36847.1"/>
    <property type="status" value="ALT_SEQ"/>
    <property type="molecule type" value="Genomic_DNA"/>
</dbReference>
<dbReference type="PIR" id="S11646">
    <property type="entry name" value="S11646"/>
</dbReference>
<dbReference type="PIR" id="T08630">
    <property type="entry name" value="T08630"/>
</dbReference>
<dbReference type="RefSeq" id="NP_417107.2">
    <property type="nucleotide sequence ID" value="NC_000913.3"/>
</dbReference>
<dbReference type="RefSeq" id="WP_001203437.1">
    <property type="nucleotide sequence ID" value="NZ_STEB01000040.1"/>
</dbReference>
<dbReference type="PDB" id="2KM7">
    <property type="method" value="NMR"/>
    <property type="chains" value="A=20-113"/>
</dbReference>
<dbReference type="PDB" id="2KXX">
    <property type="method" value="NMR"/>
    <property type="chains" value="A=21-113"/>
</dbReference>
<dbReference type="PDB" id="2YH9">
    <property type="method" value="X-ray"/>
    <property type="resolution" value="1.80 A"/>
    <property type="chains" value="A/B/C=34-113"/>
</dbReference>
<dbReference type="PDB" id="5AYW">
    <property type="method" value="X-ray"/>
    <property type="resolution" value="3.56 A"/>
    <property type="chains" value="E=20-113"/>
</dbReference>
<dbReference type="PDB" id="5D0O">
    <property type="method" value="X-ray"/>
    <property type="resolution" value="2.90 A"/>
    <property type="chains" value="E=1-113"/>
</dbReference>
<dbReference type="PDB" id="5D0Q">
    <property type="method" value="X-ray"/>
    <property type="resolution" value="3.50 A"/>
    <property type="chains" value="E/I=1-113"/>
</dbReference>
<dbReference type="PDB" id="5EKQ">
    <property type="method" value="X-ray"/>
    <property type="resolution" value="3.39 A"/>
    <property type="chains" value="E=20-113"/>
</dbReference>
<dbReference type="PDB" id="5LJO">
    <property type="method" value="EM"/>
    <property type="resolution" value="4.90 A"/>
    <property type="chains" value="E=24-110"/>
</dbReference>
<dbReference type="PDB" id="6LYQ">
    <property type="method" value="X-ray"/>
    <property type="resolution" value="3.19 A"/>
    <property type="chains" value="E=1-113"/>
</dbReference>
<dbReference type="PDB" id="6LYR">
    <property type="method" value="X-ray"/>
    <property type="resolution" value="3.28 A"/>
    <property type="chains" value="E=1-113"/>
</dbReference>
<dbReference type="PDB" id="6LYS">
    <property type="method" value="X-ray"/>
    <property type="resolution" value="3.05 A"/>
    <property type="chains" value="E=1-113"/>
</dbReference>
<dbReference type="PDB" id="6LYU">
    <property type="method" value="EM"/>
    <property type="resolution" value="4.20 A"/>
    <property type="chains" value="E=1-113"/>
</dbReference>
<dbReference type="PDB" id="6SMX">
    <property type="method" value="EM"/>
    <property type="resolution" value="6.65 A"/>
    <property type="chains" value="E=24-110"/>
</dbReference>
<dbReference type="PDB" id="6SN0">
    <property type="method" value="EM"/>
    <property type="resolution" value="10.80 A"/>
    <property type="chains" value="E=24-110"/>
</dbReference>
<dbReference type="PDB" id="6SN2">
    <property type="method" value="EM"/>
    <property type="resolution" value="9.50 A"/>
    <property type="chains" value="E=24-110"/>
</dbReference>
<dbReference type="PDB" id="6SN3">
    <property type="method" value="EM"/>
    <property type="resolution" value="8.40 A"/>
    <property type="chains" value="E=24-110"/>
</dbReference>
<dbReference type="PDB" id="6SN4">
    <property type="method" value="EM"/>
    <property type="resolution" value="9.50 A"/>
    <property type="chains" value="E=24-110"/>
</dbReference>
<dbReference type="PDB" id="6SN5">
    <property type="method" value="EM"/>
    <property type="resolution" value="9.80 A"/>
    <property type="chains" value="E=24-110"/>
</dbReference>
<dbReference type="PDB" id="6SN7">
    <property type="method" value="EM"/>
    <property type="resolution" value="8.90 A"/>
    <property type="chains" value="E=24-110"/>
</dbReference>
<dbReference type="PDB" id="6SN8">
    <property type="method" value="EM"/>
    <property type="resolution" value="8.40 A"/>
    <property type="chains" value="E=24-110"/>
</dbReference>
<dbReference type="PDB" id="6SN9">
    <property type="method" value="EM"/>
    <property type="resolution" value="9.80 A"/>
    <property type="chains" value="E=24-110"/>
</dbReference>
<dbReference type="PDB" id="6SO7">
    <property type="method" value="EM"/>
    <property type="resolution" value="10.50 A"/>
    <property type="chains" value="E=24-110"/>
</dbReference>
<dbReference type="PDB" id="6SO8">
    <property type="method" value="EM"/>
    <property type="resolution" value="9.80 A"/>
    <property type="chains" value="E=24-110"/>
</dbReference>
<dbReference type="PDB" id="6SOA">
    <property type="method" value="EM"/>
    <property type="resolution" value="10.80 A"/>
    <property type="chains" value="E=24-110"/>
</dbReference>
<dbReference type="PDB" id="6SOB">
    <property type="method" value="EM"/>
    <property type="resolution" value="8.50 A"/>
    <property type="chains" value="E=24-110"/>
</dbReference>
<dbReference type="PDB" id="6SOC">
    <property type="method" value="EM"/>
    <property type="resolution" value="9.00 A"/>
    <property type="chains" value="E=24-110"/>
</dbReference>
<dbReference type="PDB" id="6SOG">
    <property type="method" value="EM"/>
    <property type="resolution" value="8.30 A"/>
    <property type="chains" value="E=24-110"/>
</dbReference>
<dbReference type="PDB" id="6SOH">
    <property type="method" value="EM"/>
    <property type="resolution" value="9.50 A"/>
    <property type="chains" value="E=24-110"/>
</dbReference>
<dbReference type="PDB" id="6SOJ">
    <property type="method" value="EM"/>
    <property type="resolution" value="10.40 A"/>
    <property type="chains" value="E=24-110"/>
</dbReference>
<dbReference type="PDB" id="6V05">
    <property type="method" value="EM"/>
    <property type="resolution" value="4.10 A"/>
    <property type="chains" value="E=1-113"/>
</dbReference>
<dbReference type="PDB" id="7BNQ">
    <property type="method" value="EM"/>
    <property type="resolution" value="4.10 A"/>
    <property type="chains" value="E=1-113"/>
</dbReference>
<dbReference type="PDB" id="7NBX">
    <property type="method" value="EM"/>
    <property type="resolution" value="4.80 A"/>
    <property type="chains" value="E=1-113"/>
</dbReference>
<dbReference type="PDB" id="7NCS">
    <property type="method" value="EM"/>
    <property type="resolution" value="7.10 A"/>
    <property type="chains" value="E=1-113"/>
</dbReference>
<dbReference type="PDB" id="7ND0">
    <property type="method" value="EM"/>
    <property type="resolution" value="5.20 A"/>
    <property type="chains" value="E=1-113"/>
</dbReference>
<dbReference type="PDB" id="7NRI">
    <property type="method" value="EM"/>
    <property type="resolution" value="3.03 A"/>
    <property type="chains" value="E=20-113"/>
</dbReference>
<dbReference type="PDB" id="7R1W">
    <property type="method" value="EM"/>
    <property type="resolution" value="3.60 A"/>
    <property type="chains" value="E=1-113"/>
</dbReference>
<dbReference type="PDB" id="7RI4">
    <property type="method" value="EM"/>
    <property type="resolution" value="3.40 A"/>
    <property type="chains" value="E=1-113"/>
</dbReference>
<dbReference type="PDB" id="7RI5">
    <property type="method" value="EM"/>
    <property type="resolution" value="4.00 A"/>
    <property type="chains" value="E=1-113"/>
</dbReference>
<dbReference type="PDB" id="7RI6">
    <property type="method" value="EM"/>
    <property type="resolution" value="5.90 A"/>
    <property type="chains" value="E=1-113"/>
</dbReference>
<dbReference type="PDB" id="7RI7">
    <property type="method" value="EM"/>
    <property type="resolution" value="8.00 A"/>
    <property type="chains" value="E=1-113"/>
</dbReference>
<dbReference type="PDB" id="7RI9">
    <property type="method" value="EM"/>
    <property type="resolution" value="6.90 A"/>
    <property type="chains" value="E=1-113"/>
</dbReference>
<dbReference type="PDB" id="7RJ5">
    <property type="method" value="EM"/>
    <property type="resolution" value="7.00 A"/>
    <property type="chains" value="E=1-113"/>
</dbReference>
<dbReference type="PDB" id="7TSZ">
    <property type="method" value="EM"/>
    <property type="resolution" value="4.50 A"/>
    <property type="chains" value="E=20-113"/>
</dbReference>
<dbReference type="PDB" id="7TT0">
    <property type="method" value="EM"/>
    <property type="resolution" value="4.30 A"/>
    <property type="chains" value="E=20-113"/>
</dbReference>
<dbReference type="PDB" id="7TT1">
    <property type="method" value="EM"/>
    <property type="resolution" value="4.30 A"/>
    <property type="chains" value="E=20-113"/>
</dbReference>
<dbReference type="PDB" id="7TT2">
    <property type="method" value="EM"/>
    <property type="resolution" value="4.20 A"/>
    <property type="chains" value="E=20-113"/>
</dbReference>
<dbReference type="PDB" id="7TT3">
    <property type="method" value="EM"/>
    <property type="resolution" value="4.30 A"/>
    <property type="chains" value="E=20-113"/>
</dbReference>
<dbReference type="PDB" id="7TT4">
    <property type="method" value="EM"/>
    <property type="resolution" value="4.20 A"/>
    <property type="chains" value="E=20-113"/>
</dbReference>
<dbReference type="PDB" id="7TT5">
    <property type="method" value="EM"/>
    <property type="resolution" value="4.30 A"/>
    <property type="chains" value="E=20-113"/>
</dbReference>
<dbReference type="PDB" id="7TT6">
    <property type="method" value="EM"/>
    <property type="resolution" value="4.30 A"/>
    <property type="chains" value="E=20-113"/>
</dbReference>
<dbReference type="PDB" id="7TT7">
    <property type="method" value="EM"/>
    <property type="resolution" value="4.80 A"/>
    <property type="chains" value="E=20-113"/>
</dbReference>
<dbReference type="PDB" id="7TTC">
    <property type="method" value="EM"/>
    <property type="resolution" value="3.60 A"/>
    <property type="chains" value="E=20-113"/>
</dbReference>
<dbReference type="PDB" id="7YE4">
    <property type="method" value="EM"/>
    <property type="resolution" value="3.40 A"/>
    <property type="chains" value="E=1-113"/>
</dbReference>
<dbReference type="PDB" id="7YE6">
    <property type="method" value="EM"/>
    <property type="resolution" value="3.40 A"/>
    <property type="chains" value="E=1-113"/>
</dbReference>
<dbReference type="PDB" id="8ADG">
    <property type="method" value="EM"/>
    <property type="resolution" value="3.00 A"/>
    <property type="chains" value="E=1-113"/>
</dbReference>
<dbReference type="PDB" id="8ADI">
    <property type="method" value="EM"/>
    <property type="resolution" value="3.40 A"/>
    <property type="chains" value="E=1-113"/>
</dbReference>
<dbReference type="PDB" id="8BNZ">
    <property type="method" value="EM"/>
    <property type="resolution" value="3.50 A"/>
    <property type="chains" value="E=1-113"/>
</dbReference>
<dbReference type="PDB" id="8BO2">
    <property type="method" value="EM"/>
    <property type="resolution" value="3.10 A"/>
    <property type="chains" value="E=1-113"/>
</dbReference>
<dbReference type="PDB" id="8BVQ">
    <property type="method" value="EM"/>
    <property type="resolution" value="3.30 A"/>
    <property type="chains" value="E=20-113"/>
</dbReference>
<dbReference type="PDB" id="8BWC">
    <property type="method" value="EM"/>
    <property type="resolution" value="3.50 A"/>
    <property type="chains" value="E=20-113"/>
</dbReference>
<dbReference type="PDB" id="8PZ1">
    <property type="method" value="EM"/>
    <property type="resolution" value="4.10 A"/>
    <property type="chains" value="E=20-113"/>
</dbReference>
<dbReference type="PDB" id="8PZ2">
    <property type="method" value="EM"/>
    <property type="resolution" value="4.20 A"/>
    <property type="chains" value="E=20-113"/>
</dbReference>
<dbReference type="PDB" id="8PZU">
    <property type="method" value="EM"/>
    <property type="resolution" value="3.50 A"/>
    <property type="chains" value="E=20-113"/>
</dbReference>
<dbReference type="PDB" id="8PZV">
    <property type="method" value="EM"/>
    <property type="resolution" value="2.90 A"/>
    <property type="chains" value="E=20-113"/>
</dbReference>
<dbReference type="PDB" id="8Q0G">
    <property type="method" value="EM"/>
    <property type="resolution" value="4.30 A"/>
    <property type="chains" value="E=20-113"/>
</dbReference>
<dbReference type="PDB" id="8QN4">
    <property type="method" value="EM"/>
    <property type="resolution" value="3.36 A"/>
    <property type="chains" value="E=1-113"/>
</dbReference>
<dbReference type="PDB" id="8QP5">
    <property type="method" value="EM"/>
    <property type="resolution" value="4.40 A"/>
    <property type="chains" value="E=20-113"/>
</dbReference>
<dbReference type="PDB" id="8QPU">
    <property type="method" value="EM"/>
    <property type="resolution" value="5.20 A"/>
    <property type="chains" value="E=20-113"/>
</dbReference>
<dbReference type="PDB" id="8QPV">
    <property type="method" value="EM"/>
    <property type="resolution" value="4.00 A"/>
    <property type="chains" value="E=20-113"/>
</dbReference>
<dbReference type="PDB" id="8QPW">
    <property type="method" value="EM"/>
    <property type="resolution" value="5.30 A"/>
    <property type="chains" value="E=20-113"/>
</dbReference>
<dbReference type="PDB" id="8SPR">
    <property type="method" value="EM"/>
    <property type="resolution" value="3.90 A"/>
    <property type="chains" value="E=21-113"/>
</dbReference>
<dbReference type="PDB" id="8SQA">
    <property type="method" value="EM"/>
    <property type="resolution" value="4.20 A"/>
    <property type="chains" value="E=21-113"/>
</dbReference>
<dbReference type="PDB" id="8SQB">
    <property type="method" value="EM"/>
    <property type="resolution" value="3.80 A"/>
    <property type="chains" value="E=21-113"/>
</dbReference>
<dbReference type="PDB" id="9CNW">
    <property type="method" value="EM"/>
    <property type="resolution" value="2.60 A"/>
    <property type="chains" value="E=1-113"/>
</dbReference>
<dbReference type="PDB" id="9CNX">
    <property type="method" value="EM"/>
    <property type="resolution" value="3.55 A"/>
    <property type="chains" value="E=1-113"/>
</dbReference>
<dbReference type="PDB" id="9CNY">
    <property type="method" value="EM"/>
    <property type="resolution" value="4.00 A"/>
    <property type="chains" value="E=1-113"/>
</dbReference>
<dbReference type="PDB" id="9CNZ">
    <property type="method" value="EM"/>
    <property type="resolution" value="3.10 A"/>
    <property type="chains" value="E=1-113"/>
</dbReference>
<dbReference type="PDB" id="9CO0">
    <property type="method" value="EM"/>
    <property type="resolution" value="3.30 A"/>
    <property type="chains" value="E=1-113"/>
</dbReference>
<dbReference type="PDB" id="9HE1">
    <property type="method" value="EM"/>
    <property type="resolution" value="3.00 A"/>
    <property type="chains" value="E=1-113"/>
</dbReference>
<dbReference type="PDBsum" id="2KM7"/>
<dbReference type="PDBsum" id="2KXX"/>
<dbReference type="PDBsum" id="2YH9"/>
<dbReference type="PDBsum" id="5AYW"/>
<dbReference type="PDBsum" id="5D0O"/>
<dbReference type="PDBsum" id="5D0Q"/>
<dbReference type="PDBsum" id="5EKQ"/>
<dbReference type="PDBsum" id="5LJO"/>
<dbReference type="PDBsum" id="6LYQ"/>
<dbReference type="PDBsum" id="6LYR"/>
<dbReference type="PDBsum" id="6LYS"/>
<dbReference type="PDBsum" id="6LYU"/>
<dbReference type="PDBsum" id="6SMX"/>
<dbReference type="PDBsum" id="6SN0"/>
<dbReference type="PDBsum" id="6SN2"/>
<dbReference type="PDBsum" id="6SN3"/>
<dbReference type="PDBsum" id="6SN4"/>
<dbReference type="PDBsum" id="6SN5"/>
<dbReference type="PDBsum" id="6SN7"/>
<dbReference type="PDBsum" id="6SN8"/>
<dbReference type="PDBsum" id="6SN9"/>
<dbReference type="PDBsum" id="6SO7"/>
<dbReference type="PDBsum" id="6SO8"/>
<dbReference type="PDBsum" id="6SOA"/>
<dbReference type="PDBsum" id="6SOB"/>
<dbReference type="PDBsum" id="6SOC"/>
<dbReference type="PDBsum" id="6SOG"/>
<dbReference type="PDBsum" id="6SOH"/>
<dbReference type="PDBsum" id="6SOJ"/>
<dbReference type="PDBsum" id="6V05"/>
<dbReference type="PDBsum" id="7BNQ"/>
<dbReference type="PDBsum" id="7NBX"/>
<dbReference type="PDBsum" id="7NCS"/>
<dbReference type="PDBsum" id="7ND0"/>
<dbReference type="PDBsum" id="7NRI"/>
<dbReference type="PDBsum" id="7R1W"/>
<dbReference type="PDBsum" id="7RI4"/>
<dbReference type="PDBsum" id="7RI5"/>
<dbReference type="PDBsum" id="7RI6"/>
<dbReference type="PDBsum" id="7RI7"/>
<dbReference type="PDBsum" id="7RI9"/>
<dbReference type="PDBsum" id="7RJ5"/>
<dbReference type="PDBsum" id="7TSZ"/>
<dbReference type="PDBsum" id="7TT0"/>
<dbReference type="PDBsum" id="7TT1"/>
<dbReference type="PDBsum" id="7TT2"/>
<dbReference type="PDBsum" id="7TT3"/>
<dbReference type="PDBsum" id="7TT4"/>
<dbReference type="PDBsum" id="7TT5"/>
<dbReference type="PDBsum" id="7TT6"/>
<dbReference type="PDBsum" id="7TT7"/>
<dbReference type="PDBsum" id="7TTC"/>
<dbReference type="PDBsum" id="7YE4"/>
<dbReference type="PDBsum" id="7YE6"/>
<dbReference type="PDBsum" id="8ADG"/>
<dbReference type="PDBsum" id="8ADI"/>
<dbReference type="PDBsum" id="8BNZ"/>
<dbReference type="PDBsum" id="8BO2"/>
<dbReference type="PDBsum" id="8BVQ"/>
<dbReference type="PDBsum" id="8BWC"/>
<dbReference type="PDBsum" id="8PZ1"/>
<dbReference type="PDBsum" id="8PZ2"/>
<dbReference type="PDBsum" id="8PZU"/>
<dbReference type="PDBsum" id="8PZV"/>
<dbReference type="PDBsum" id="8Q0G"/>
<dbReference type="PDBsum" id="8QN4"/>
<dbReference type="PDBsum" id="8QP5"/>
<dbReference type="PDBsum" id="8QPU"/>
<dbReference type="PDBsum" id="8QPV"/>
<dbReference type="PDBsum" id="8QPW"/>
<dbReference type="PDBsum" id="8SPR"/>
<dbReference type="PDBsum" id="8SQA"/>
<dbReference type="PDBsum" id="8SQB"/>
<dbReference type="PDBsum" id="9CNW"/>
<dbReference type="PDBsum" id="9CNX"/>
<dbReference type="PDBsum" id="9CNY"/>
<dbReference type="PDBsum" id="9CNZ"/>
<dbReference type="PDBsum" id="9CO0"/>
<dbReference type="PDBsum" id="9HE1"/>
<dbReference type="BMRB" id="P0A937"/>
<dbReference type="EMDB" id="EMD-12232"/>
<dbReference type="EMDB" id="EMD-12262"/>
<dbReference type="EMDB" id="EMD-12263"/>
<dbReference type="EMDB" id="EMD-12271"/>
<dbReference type="EMDB" id="EMD-12272"/>
<dbReference type="EMDB" id="EMD-12546"/>
<dbReference type="EMDB" id="EMD-14242"/>
<dbReference type="EMDB" id="EMD-15362"/>
<dbReference type="EMDB" id="EMD-15363"/>
<dbReference type="EMDB" id="EMD-16137"/>
<dbReference type="EMDB" id="EMD-16138"/>
<dbReference type="EMDB" id="EMD-16268"/>
<dbReference type="EMDB" id="EMD-18034"/>
<dbReference type="EMDB" id="EMD-18035"/>
<dbReference type="EMDB" id="EMD-18045"/>
<dbReference type="EMDB" id="EMD-18046"/>
<dbReference type="EMDB" id="EMD-18053"/>
<dbReference type="EMDB" id="EMD-18507"/>
<dbReference type="EMDB" id="EMD-18543"/>
<dbReference type="EMDB" id="EMD-18562"/>
<dbReference type="EMDB" id="EMD-18563"/>
<dbReference type="EMDB" id="EMD-18564"/>
<dbReference type="EMDB" id="EMD-30018"/>
<dbReference type="EMDB" id="EMD-33763"/>
<dbReference type="EMDB" id="EMD-33765"/>
<dbReference type="EMDB" id="EMD-4061"/>
<dbReference type="EMDB" id="EMD-52074"/>
<dbReference type="SMR" id="P0A937"/>
<dbReference type="BioGRID" id="4259570">
    <property type="interactions" value="145"/>
</dbReference>
<dbReference type="BioGRID" id="849957">
    <property type="interactions" value="2"/>
</dbReference>
<dbReference type="ComplexPortal" id="CPX-1923">
    <property type="entry name" value="BAM complex"/>
</dbReference>
<dbReference type="DIP" id="DIP-10895N"/>
<dbReference type="FunCoup" id="P0A937">
    <property type="interactions" value="70"/>
</dbReference>
<dbReference type="IntAct" id="P0A937">
    <property type="interactions" value="6"/>
</dbReference>
<dbReference type="MINT" id="P0A937"/>
<dbReference type="STRING" id="511145.b2617"/>
<dbReference type="TCDB" id="1.B.33.1.3">
    <property type="family name" value="the outer membrane protein insertion porin (bam complex) (ompip) family"/>
</dbReference>
<dbReference type="jPOST" id="P0A937"/>
<dbReference type="PaxDb" id="511145-b2617"/>
<dbReference type="EnsemblBacteria" id="AAC75666">
    <property type="protein sequence ID" value="AAC75666"/>
    <property type="gene ID" value="b2617"/>
</dbReference>
<dbReference type="GeneID" id="93774466"/>
<dbReference type="GeneID" id="945583"/>
<dbReference type="KEGG" id="ecj:JW2598"/>
<dbReference type="KEGG" id="eco:b2617"/>
<dbReference type="KEGG" id="ecoc:C3026_14485"/>
<dbReference type="PATRIC" id="fig|1411691.4.peg.4122"/>
<dbReference type="EchoBASE" id="EB0945"/>
<dbReference type="eggNOG" id="COG2913">
    <property type="taxonomic scope" value="Bacteria"/>
</dbReference>
<dbReference type="HOGENOM" id="CLU_083835_4_0_6"/>
<dbReference type="InParanoid" id="P0A937"/>
<dbReference type="OMA" id="FGSNVWY"/>
<dbReference type="OrthoDB" id="9808250at2"/>
<dbReference type="PhylomeDB" id="P0A937"/>
<dbReference type="BioCyc" id="EcoCyc:EG10952-MONOMER"/>
<dbReference type="EvolutionaryTrace" id="P0A937"/>
<dbReference type="PRO" id="PR:P0A937"/>
<dbReference type="Proteomes" id="UP000000625">
    <property type="component" value="Chromosome"/>
</dbReference>
<dbReference type="GO" id="GO:1990063">
    <property type="term" value="C:Bam protein complex"/>
    <property type="evidence" value="ECO:0000314"/>
    <property type="project" value="EcoCyc"/>
</dbReference>
<dbReference type="GO" id="GO:0016020">
    <property type="term" value="C:membrane"/>
    <property type="evidence" value="ECO:0000314"/>
    <property type="project" value="ComplexPortal"/>
</dbReference>
<dbReference type="GO" id="GO:0042802">
    <property type="term" value="F:identical protein binding"/>
    <property type="evidence" value="ECO:0000353"/>
    <property type="project" value="IntAct"/>
</dbReference>
<dbReference type="GO" id="GO:0030674">
    <property type="term" value="F:protein-macromolecule adaptor activity"/>
    <property type="evidence" value="ECO:0000314"/>
    <property type="project" value="EcoCyc"/>
</dbReference>
<dbReference type="GO" id="GO:0043165">
    <property type="term" value="P:Gram-negative-bacterium-type cell outer membrane assembly"/>
    <property type="evidence" value="ECO:0000314"/>
    <property type="project" value="ComplexPortal"/>
</dbReference>
<dbReference type="GO" id="GO:0051205">
    <property type="term" value="P:protein insertion into membrane"/>
    <property type="evidence" value="ECO:0000314"/>
    <property type="project" value="ComplexPortal"/>
</dbReference>
<dbReference type="GO" id="GO:0046677">
    <property type="term" value="P:response to antibiotic"/>
    <property type="evidence" value="ECO:0000315"/>
    <property type="project" value="EcoCyc"/>
</dbReference>
<dbReference type="FunFam" id="3.30.1450.10:FF:000001">
    <property type="entry name" value="Outer membrane protein assembly factor BamE"/>
    <property type="match status" value="1"/>
</dbReference>
<dbReference type="Gene3D" id="3.30.1450.10">
    <property type="match status" value="1"/>
</dbReference>
<dbReference type="HAMAP" id="MF_00925">
    <property type="entry name" value="OM_assembly_BamE"/>
    <property type="match status" value="1"/>
</dbReference>
<dbReference type="InterPro" id="IPR026592">
    <property type="entry name" value="BamE"/>
</dbReference>
<dbReference type="InterPro" id="IPR037873">
    <property type="entry name" value="BamE-like"/>
</dbReference>
<dbReference type="InterPro" id="IPR007450">
    <property type="entry name" value="BamE_dom"/>
</dbReference>
<dbReference type="NCBIfam" id="NF008585">
    <property type="entry name" value="PRK11548.1"/>
    <property type="match status" value="1"/>
</dbReference>
<dbReference type="PANTHER" id="PTHR37482">
    <property type="entry name" value="OUTER MEMBRANE PROTEIN ASSEMBLY FACTOR BAME"/>
    <property type="match status" value="1"/>
</dbReference>
<dbReference type="PANTHER" id="PTHR37482:SF1">
    <property type="entry name" value="OUTER MEMBRANE PROTEIN ASSEMBLY FACTOR BAME"/>
    <property type="match status" value="1"/>
</dbReference>
<dbReference type="Pfam" id="PF04355">
    <property type="entry name" value="BamE"/>
    <property type="match status" value="1"/>
</dbReference>
<dbReference type="PROSITE" id="PS51257">
    <property type="entry name" value="PROKAR_LIPOPROTEIN"/>
    <property type="match status" value="1"/>
</dbReference>
<keyword id="KW-0002">3D-structure</keyword>
<keyword id="KW-0998">Cell outer membrane</keyword>
<keyword id="KW-0449">Lipoprotein</keyword>
<keyword id="KW-0472">Membrane</keyword>
<keyword id="KW-0564">Palmitate</keyword>
<keyword id="KW-1185">Reference proteome</keyword>
<keyword id="KW-0732">Signal</keyword>
<feature type="signal peptide" evidence="1">
    <location>
        <begin position="1"/>
        <end position="19"/>
    </location>
</feature>
<feature type="chain" id="PRO_0000032810" description="Outer membrane protein assembly factor BamE">
    <location>
        <begin position="20"/>
        <end position="113"/>
    </location>
</feature>
<feature type="lipid moiety-binding region" description="N-palmitoyl cysteine" evidence="15">
    <location>
        <position position="20"/>
    </location>
</feature>
<feature type="lipid moiety-binding region" description="S-diacylglycerol cysteine" evidence="15">
    <location>
        <position position="20"/>
    </location>
</feature>
<feature type="turn" evidence="27">
    <location>
        <begin position="23"/>
        <end position="26"/>
    </location>
</feature>
<feature type="strand" evidence="26">
    <location>
        <begin position="32"/>
        <end position="35"/>
    </location>
</feature>
<feature type="turn" evidence="26">
    <location>
        <begin position="42"/>
        <end position="44"/>
    </location>
</feature>
<feature type="helix" evidence="25">
    <location>
        <begin position="52"/>
        <end position="59"/>
    </location>
</feature>
<feature type="strand" evidence="25">
    <location>
        <begin position="63"/>
        <end position="65"/>
    </location>
</feature>
<feature type="strand" evidence="26">
    <location>
        <begin position="68"/>
        <end position="70"/>
    </location>
</feature>
<feature type="strand" evidence="25">
    <location>
        <begin position="71"/>
        <end position="76"/>
    </location>
</feature>
<feature type="strand" evidence="28">
    <location>
        <begin position="77"/>
        <end position="80"/>
    </location>
</feature>
<feature type="turn" evidence="26">
    <location>
        <begin position="82"/>
        <end position="84"/>
    </location>
</feature>
<feature type="strand" evidence="25">
    <location>
        <begin position="85"/>
        <end position="87"/>
    </location>
</feature>
<feature type="strand" evidence="25">
    <location>
        <begin position="90"/>
        <end position="95"/>
    </location>
</feature>
<feature type="turn" evidence="29">
    <location>
        <begin position="96"/>
        <end position="98"/>
    </location>
</feature>
<feature type="strand" evidence="25">
    <location>
        <begin position="99"/>
        <end position="107"/>
    </location>
</feature>
<feature type="turn" evidence="24">
    <location>
        <begin position="109"/>
        <end position="112"/>
    </location>
</feature>
<evidence type="ECO:0000255" key="1">
    <source>
        <dbReference type="HAMAP-Rule" id="MF_00925"/>
    </source>
</evidence>
<evidence type="ECO:0000269" key="2">
    <source>
    </source>
</evidence>
<evidence type="ECO:0000269" key="3">
    <source>
    </source>
</evidence>
<evidence type="ECO:0000269" key="4">
    <source>
    </source>
</evidence>
<evidence type="ECO:0000269" key="5">
    <source>
    </source>
</evidence>
<evidence type="ECO:0000269" key="6">
    <source>
    </source>
</evidence>
<evidence type="ECO:0000269" key="7">
    <source>
    </source>
</evidence>
<evidence type="ECO:0000269" key="8">
    <source>
    </source>
</evidence>
<evidence type="ECO:0000269" key="9">
    <source>
    </source>
</evidence>
<evidence type="ECO:0000269" key="10">
    <source>
    </source>
</evidence>
<evidence type="ECO:0000269" key="11">
    <source>
    </source>
</evidence>
<evidence type="ECO:0000269" key="12">
    <source>
    </source>
</evidence>
<evidence type="ECO:0000269" key="13">
    <source>
    </source>
</evidence>
<evidence type="ECO:0000305" key="14"/>
<evidence type="ECO:0000305" key="15">
    <source>
    </source>
</evidence>
<evidence type="ECO:0007744" key="16">
    <source>
        <dbReference type="PDB" id="2KM7"/>
    </source>
</evidence>
<evidence type="ECO:0007744" key="17">
    <source>
        <dbReference type="PDB" id="2KXX"/>
    </source>
</evidence>
<evidence type="ECO:0007744" key="18">
    <source>
        <dbReference type="PDB" id="2YH9"/>
    </source>
</evidence>
<evidence type="ECO:0007744" key="19">
    <source>
        <dbReference type="PDB" id="5AYW"/>
    </source>
</evidence>
<evidence type="ECO:0007744" key="20">
    <source>
        <dbReference type="PDB" id="5D0O"/>
    </source>
</evidence>
<evidence type="ECO:0007744" key="21">
    <source>
        <dbReference type="PDB" id="5D0Q"/>
    </source>
</evidence>
<evidence type="ECO:0007744" key="22">
    <source>
        <dbReference type="PDB" id="5EKQ"/>
    </source>
</evidence>
<evidence type="ECO:0007744" key="23">
    <source>
        <dbReference type="PDB" id="5LJO"/>
    </source>
</evidence>
<evidence type="ECO:0007829" key="24">
    <source>
        <dbReference type="PDB" id="2KM7"/>
    </source>
</evidence>
<evidence type="ECO:0007829" key="25">
    <source>
        <dbReference type="PDB" id="2YH9"/>
    </source>
</evidence>
<evidence type="ECO:0007829" key="26">
    <source>
        <dbReference type="PDB" id="5D0O"/>
    </source>
</evidence>
<evidence type="ECO:0007829" key="27">
    <source>
        <dbReference type="PDB" id="7YE4"/>
    </source>
</evidence>
<evidence type="ECO:0007829" key="28">
    <source>
        <dbReference type="PDB" id="7YE6"/>
    </source>
</evidence>
<evidence type="ECO:0007829" key="29">
    <source>
        <dbReference type="PDB" id="8QN4"/>
    </source>
</evidence>
<proteinExistence type="evidence at protein level"/>
<accession>P0A937</accession>
<accession>P23089</accession>
<comment type="function">
    <text evidence="2 3 5 7 8 9 10 11 12 13">Part of the outer membrane protein assembly complex (Bam), which is involved in assembly and insertion of beta-barrel proteins into the outer membrane. Nonessential member of the complex that stabilizes the interaction between the essential proteins BamA and BamD. May modulate the conformation of BamA, likely through interactions with BamD. Efficient substrate folding and insertion into the outer membrane requires all 5 subunits (PubMed:20378773, PubMed:21823654, PubMed:27686148). A lateral gate may open between the first and last strands of the BamA beta-barrel that allows substrate to insert into the outer membrane; comparison of the structures of complete and nearly complete Bam complexes show there is considerable movement of all 5 proteins (PubMed:26744406, PubMed:26900875, PubMed:26901871, PubMed:27686148).</text>
</comment>
<comment type="subunit">
    <text evidence="2 3 4 5 6 7 8 10 11 12 13">Part of the Bam complex, which is composed of the outer membrane protein BamA, and four lipoproteins BamB, BamC, BamD and BamE. Forms a subcomplex with BamC and BamD. Monomer in the periplasm, but is able to adopt a dimeric conformation in the cytoplasm (PubMed:21207987). The Bam complex has the shape of a hat, with the BamA beta-barrel crown in the outer membrane and the periplasmic brim formed by the BamA POTRA domains and the 4 lipoproteins (PubMed:26744406, PubMed:26900875, PubMed:26901871, PubMed:27686148). The intact Bam complex can have 2 BamE subunits (PubMed:27686148).</text>
</comment>
<comment type="interaction">
    <interactant intactId="EBI-6391574">
        <id>P0A937</id>
    </interactant>
    <interactant intactId="EBI-1128087">
        <id>P0AC02</id>
        <label>bamD</label>
    </interactant>
    <organismsDiffer>false</organismsDiffer>
    <experiments>3</experiments>
</comment>
<comment type="interaction">
    <interactant intactId="EBI-6391574">
        <id>P0A937</id>
    </interactant>
    <interactant intactId="EBI-6391574">
        <id>P0A937</id>
        <label>bamE</label>
    </interactant>
    <organismsDiffer>false</organismsDiffer>
    <experiments>14</experiments>
</comment>
<comment type="subcellular location">
    <subcellularLocation>
        <location evidence="1 2 11 12">Cell outer membrane</location>
        <topology evidence="1 2 13">Lipid-anchor</topology>
    </subcellularLocation>
</comment>
<comment type="mass spectrometry" mass="12383.0" method="Electrospray" evidence="13">
    <text>With 3 palmitic acid (C16) acyl chains.</text>
</comment>
<comment type="mass spectrometry" mass="12413.0" method="Electrospray" evidence="13">
    <text>With 2 palmitic (C16) and 1 stearic (C18) acid acyl chains.</text>
</comment>
<comment type="disruption phenotype">
    <text evidence="2">Mutants show minor defects in the assembly of outer membrane proteins.</text>
</comment>
<comment type="similarity">
    <text evidence="1">Belongs to the BamE family.</text>
</comment>
<comment type="sequence caution" evidence="14">
    <conflict type="miscellaneous discrepancy">
        <sequence resource="EMBL-CDS" id="CAA36847"/>
    </conflict>
    <text>Sequence of unknown provenance, it does not match this entry.</text>
</comment>
<organism>
    <name type="scientific">Escherichia coli (strain K12)</name>
    <dbReference type="NCBI Taxonomy" id="83333"/>
    <lineage>
        <taxon>Bacteria</taxon>
        <taxon>Pseudomonadati</taxon>
        <taxon>Pseudomonadota</taxon>
        <taxon>Gammaproteobacteria</taxon>
        <taxon>Enterobacterales</taxon>
        <taxon>Enterobacteriaceae</taxon>
        <taxon>Escherichia</taxon>
    </lineage>
</organism>
<protein>
    <recommendedName>
        <fullName evidence="1">Outer membrane protein assembly factor BamE</fullName>
    </recommendedName>
</protein>
<reference key="1">
    <citation type="journal article" date="1997" name="DNA Res.">
        <title>Construction of a contiguous 874-kb sequence of the Escherichia coli-K12 genome corresponding to 50.0-68.8 min on the linkage map and analysis of its sequence features.</title>
        <authorList>
            <person name="Yamamoto Y."/>
            <person name="Aiba H."/>
            <person name="Baba T."/>
            <person name="Hayashi K."/>
            <person name="Inada T."/>
            <person name="Isono K."/>
            <person name="Itoh T."/>
            <person name="Kimura S."/>
            <person name="Kitagawa M."/>
            <person name="Makino K."/>
            <person name="Miki T."/>
            <person name="Mitsuhashi N."/>
            <person name="Mizobuchi K."/>
            <person name="Mori H."/>
            <person name="Nakade S."/>
            <person name="Nakamura Y."/>
            <person name="Nashimoto H."/>
            <person name="Oshima T."/>
            <person name="Oyama S."/>
            <person name="Saito N."/>
            <person name="Sampei G."/>
            <person name="Satoh Y."/>
            <person name="Sivasundaram S."/>
            <person name="Tagami H."/>
            <person name="Takahashi H."/>
            <person name="Takeda J."/>
            <person name="Takemoto K."/>
            <person name="Uehara K."/>
            <person name="Wada C."/>
            <person name="Yamagata S."/>
            <person name="Horiuchi T."/>
        </authorList>
    </citation>
    <scope>NUCLEOTIDE SEQUENCE [LARGE SCALE GENOMIC DNA]</scope>
    <source>
        <strain>K12 / W3110 / ATCC 27325 / DSM 5911</strain>
    </source>
</reference>
<reference key="2">
    <citation type="journal article" date="1997" name="Science">
        <title>The complete genome sequence of Escherichia coli K-12.</title>
        <authorList>
            <person name="Blattner F.R."/>
            <person name="Plunkett G. III"/>
            <person name="Bloch C.A."/>
            <person name="Perna N.T."/>
            <person name="Burland V."/>
            <person name="Riley M."/>
            <person name="Collado-Vides J."/>
            <person name="Glasner J.D."/>
            <person name="Rode C.K."/>
            <person name="Mayhew G.F."/>
            <person name="Gregor J."/>
            <person name="Davis N.W."/>
            <person name="Kirkpatrick H.A."/>
            <person name="Goeden M.A."/>
            <person name="Rose D.J."/>
            <person name="Mau B."/>
            <person name="Shao Y."/>
        </authorList>
    </citation>
    <scope>NUCLEOTIDE SEQUENCE [LARGE SCALE GENOMIC DNA]</scope>
    <source>
        <strain>K12 / MG1655 / ATCC 47076</strain>
    </source>
</reference>
<reference key="3">
    <citation type="journal article" date="2006" name="Mol. Syst. Biol.">
        <title>Highly accurate genome sequences of Escherichia coli K-12 strains MG1655 and W3110.</title>
        <authorList>
            <person name="Hayashi K."/>
            <person name="Morooka N."/>
            <person name="Yamamoto Y."/>
            <person name="Fujita K."/>
            <person name="Isono K."/>
            <person name="Choi S."/>
            <person name="Ohtsubo E."/>
            <person name="Baba T."/>
            <person name="Wanner B.L."/>
            <person name="Mori H."/>
            <person name="Horiuchi T."/>
        </authorList>
    </citation>
    <scope>NUCLEOTIDE SEQUENCE [LARGE SCALE GENOMIC DNA]</scope>
    <source>
        <strain>K12 / W3110 / ATCC 27325 / DSM 5911</strain>
    </source>
</reference>
<reference key="4">
    <citation type="journal article" date="1991" name="J. Bacteriol.">
        <title>Two new genes located between 2758 and 2761 kilobase pairs on the Escherichia coli genome.</title>
        <authorList>
            <person name="Chauhan A.K."/>
            <person name="Miczak A."/>
            <person name="Apirion D."/>
        </authorList>
    </citation>
    <scope>NUCLEOTIDE SEQUENCE [GENOMIC DNA] OF 64-113</scope>
    <source>
        <strain>K12</strain>
    </source>
</reference>
<reference key="5">
    <citation type="journal article" date="2007" name="Proc. Natl. Acad. Sci. U.S.A.">
        <title>Lipoprotein SmpA is a component of the YaeT complex that assembles outer membrane proteins in Escherichia coli.</title>
        <authorList>
            <person name="Sklar J.G."/>
            <person name="Wu T."/>
            <person name="Gronenberg L.S."/>
            <person name="Malinverni J.C."/>
            <person name="Kahne D."/>
            <person name="Silhavy T.J."/>
        </authorList>
    </citation>
    <scope>FUNCTION</scope>
    <scope>SUBUNIT</scope>
    <scope>SUBCELLULAR LOCATION</scope>
    <scope>DISRUPTION PHENOTYPE</scope>
    <source>
        <strain>K12</strain>
    </source>
</reference>
<reference key="6">
    <citation type="journal article" date="2010" name="Science">
        <title>Reconstitution of outer membrane protein assembly from purified components.</title>
        <authorList>
            <person name="Hagan C.L."/>
            <person name="Kim S."/>
            <person name="Kahne D."/>
        </authorList>
    </citation>
    <scope>FUNCTION</scope>
    <scope>SUBUNIT</scope>
</reference>
<reference key="7">
    <citation type="journal article" date="2011" name="Biochemistry">
        <title>The reconstituted Escherichia coli Bam complex catalyzes multiple rounds of beta-barrel assembly.</title>
        <authorList>
            <person name="Hagan C.L."/>
            <person name="Kahne D."/>
        </authorList>
    </citation>
    <scope>FUNCTION</scope>
    <scope>SUBUNIT</scope>
</reference>
<reference key="8">
    <citation type="journal article" date="2012" name="J. Bacteriol.">
        <title>BamE modulates the Escherichia coli beta-barrel assembly machine component BamA.</title>
        <authorList>
            <person name="Rigel N.W."/>
            <person name="Schwalm J."/>
            <person name="Ricci D.P."/>
            <person name="Silhavy T.J."/>
        </authorList>
    </citation>
    <scope>FUNCTION</scope>
    <source>
        <strain>K12 / MC4100 / ATCC 35695 / DSM 6574</strain>
    </source>
</reference>
<reference key="9">
    <citation type="journal article" date="2010" name="Acta Crystallogr. F">
        <title>Crystallization and preliminary X-ray data collection of the Escherichia coli lipoproteins BamC, BamD and BamE.</title>
        <authorList>
            <person name="Albrecht R."/>
            <person name="Zeth K."/>
        </authorList>
    </citation>
    <scope>CRYSTALLIZATION</scope>
    <scope>SUBUNIT</scope>
</reference>
<reference evidence="17" key="10">
    <citation type="journal article" date="2011" name="Biochemistry">
        <title>Structural characterization of Escherichia coli BamE, a lipoprotein component of the beta-barrel assembly machinery complex.</title>
        <authorList>
            <person name="Kim K.H."/>
            <person name="Kang H.S."/>
            <person name="Okon M."/>
            <person name="Escobar-Cabrera E."/>
            <person name="McIntosh L.P."/>
            <person name="Paetzel M."/>
        </authorList>
    </citation>
    <scope>STRUCTURE BY NMR OF 21-113</scope>
    <scope>FUNCTION</scope>
    <scope>SUBUNIT</scope>
</reference>
<reference evidence="16" key="11">
    <citation type="journal article" date="2011" name="EMBO Rep.">
        <title>Structure and function of BamE within the outer membrane and the beta-barrel assembly machine.</title>
        <authorList>
            <person name="Knowles T.J."/>
            <person name="Browning D.F."/>
            <person name="Jeeves M."/>
            <person name="Maderbocus R."/>
            <person name="Rajesh S."/>
            <person name="Sridhar P."/>
            <person name="Manoli E."/>
            <person name="Emery D."/>
            <person name="Sommer U."/>
            <person name="Spencer A."/>
            <person name="Leyton D.L."/>
            <person name="Squire D."/>
            <person name="Chaudhuri R.R."/>
            <person name="Viant M.R."/>
            <person name="Cunningham A.F."/>
            <person name="Henderson I.R."/>
            <person name="Overduin M."/>
        </authorList>
    </citation>
    <scope>STRUCTURE BY NMR OF 21-113</scope>
    <scope>SUBUNIT</scope>
</reference>
<reference evidence="18" key="12">
    <citation type="journal article" date="2011" name="J. Biol. Chem.">
        <title>Structural basis of outer membrane protein biogenesis in bacteria.</title>
        <authorList>
            <person name="Albrecht R."/>
            <person name="Zeth K."/>
        </authorList>
    </citation>
    <scope>X-RAY CRYSTALLOGRAPHY (1.8 ANGSTROMS) OF 34-113</scope>
    <scope>SUBUNIT</scope>
    <scope>FUNCTION</scope>
</reference>
<reference evidence="23" key="13">
    <citation type="journal article" date="2016" name="Nat. Commun.">
        <title>Lateral opening in the intact beta-barrel assembly machinery captured by cryo-EM.</title>
        <authorList>
            <person name="Iadanza M.G."/>
            <person name="Higgins A.J."/>
            <person name="Schiffrin B."/>
            <person name="Calabrese A.N."/>
            <person name="Brockwell D.J."/>
            <person name="Ashcroft A.E."/>
            <person name="Radford S.E."/>
            <person name="Ranson N.A."/>
        </authorList>
    </citation>
    <scope>STRUCTURE BY ELECTRON MICROSCOPY (4.90 ANGSTROMS) OF 24-110 IN LATERAL OPEN BAM COMPLEX</scope>
    <scope>FUNCTION</scope>
    <scope>REACTION MECHANISM</scope>
    <scope>SUBUNIT</scope>
    <scope>MASS SPECTROMETRY</scope>
    <scope>DIACYLGLYCEROL AT CYS-20</scope>
    <scope>PALMITOYLATION AT CYS-20</scope>
</reference>
<reference evidence="19" key="14">
    <citation type="journal article" date="2016" name="Nat. Struct. Mol. Biol.">
        <title>Structure of the BAM complex and its implications for biogenesis of outer-membrane proteins.</title>
        <authorList>
            <person name="Han L."/>
            <person name="Zheng J."/>
            <person name="Wang Y."/>
            <person name="Yang X."/>
            <person name="Liu Y."/>
            <person name="Sun C."/>
            <person name="Cao B."/>
            <person name="Zhou H."/>
            <person name="Ni D."/>
            <person name="Lou J."/>
            <person name="Zhao Y."/>
            <person name="Huang Y."/>
        </authorList>
    </citation>
    <scope>X-RAY CRYSTALLOGRAPHY (3.56 ANGSTROMS) OF 20-113 IN LATERAL CLOSED BAM COMPLEX</scope>
    <scope>SUBUNIT</scope>
    <scope>SUBCELLULAR LOCATION</scope>
    <source>
        <strain>K12 / MG1655 / ATCC 47076</strain>
    </source>
</reference>
<reference evidence="20 21" key="15">
    <citation type="journal article" date="2016" name="Nature">
        <title>Structural basis of outer membrane protein insertion by the BAM complex.</title>
        <authorList>
            <person name="Gu Y."/>
            <person name="Li H."/>
            <person name="Dong H."/>
            <person name="Zeng Y."/>
            <person name="Zhang Z."/>
            <person name="Paterson N.G."/>
            <person name="Stansfeld P.J."/>
            <person name="Wang Z."/>
            <person name="Zhang Y."/>
            <person name="Wang W."/>
            <person name="Dong C."/>
        </authorList>
    </citation>
    <scope>X-RAY CRYSTALLOGRAPHY (2.90 ANGSTROMS) IN LATERAL CLOSED BAM COMPLEX AND LATERAL OPEN BAMACDE SUBCOMPLEX</scope>
    <scope>SUBUNIT</scope>
    <scope>SUBCELLULAR LOCATION</scope>
</reference>
<reference evidence="22" key="16">
    <citation type="journal article" date="2016" name="Science">
        <title>The structure of the beta-barrel assembly machinery complex.</title>
        <authorList>
            <person name="Bakelar J."/>
            <person name="Buchanan S.K."/>
            <person name="Noinaj N."/>
        </authorList>
    </citation>
    <scope>X-RAY CRYSTALLOGRAPHY (3.39 ANGSTROMS) OF 20-113 OF LATERAL OPEN BAMACDE COMPLEX</scope>
    <scope>SUBUNIT</scope>
</reference>
<gene>
    <name evidence="1" type="primary">bamE</name>
    <name type="synonym">smpA</name>
    <name type="ordered locus">b2617</name>
    <name type="ordered locus">JW2598</name>
</gene>
<sequence length="113" mass="12302">MRCKTLTAAAAVLLMLTAGCSTLERVVYRPDINQGNYLTANDVSKIRVGMTQQQVAYALGTPLMSDPFGTNTWFYVFRQQPGHEGVTQQTLTLTFNSSGVLTNIDNKPALSGN</sequence>